<dbReference type="EC" id="1.14.99.1"/>
<dbReference type="EMBL" id="AF047841">
    <property type="protein sequence ID" value="AAC05637.1"/>
    <property type="molecule type" value="mRNA"/>
</dbReference>
<dbReference type="SMR" id="O62725"/>
<dbReference type="PeroxiBase" id="4136">
    <property type="entry name" value="MvPGHS02"/>
</dbReference>
<dbReference type="GlyCosmos" id="O62725">
    <property type="glycosylation" value="4 sites, No reported glycans"/>
</dbReference>
<dbReference type="UniPathway" id="UPA00662"/>
<dbReference type="Proteomes" id="UP000694425">
    <property type="component" value="Unplaced"/>
</dbReference>
<dbReference type="GO" id="GO:0005789">
    <property type="term" value="C:endoplasmic reticulum membrane"/>
    <property type="evidence" value="ECO:0007669"/>
    <property type="project" value="UniProtKB-SubCell"/>
</dbReference>
<dbReference type="GO" id="GO:0043005">
    <property type="term" value="C:neuron projection"/>
    <property type="evidence" value="ECO:0007669"/>
    <property type="project" value="TreeGrafter"/>
</dbReference>
<dbReference type="GO" id="GO:0005637">
    <property type="term" value="C:nuclear inner membrane"/>
    <property type="evidence" value="ECO:0000250"/>
    <property type="project" value="UniProtKB"/>
</dbReference>
<dbReference type="GO" id="GO:0005640">
    <property type="term" value="C:nuclear outer membrane"/>
    <property type="evidence" value="ECO:0000250"/>
    <property type="project" value="UniProtKB"/>
</dbReference>
<dbReference type="GO" id="GO:0020037">
    <property type="term" value="F:heme binding"/>
    <property type="evidence" value="ECO:0000250"/>
    <property type="project" value="UniProtKB"/>
</dbReference>
<dbReference type="GO" id="GO:0046872">
    <property type="term" value="F:metal ion binding"/>
    <property type="evidence" value="ECO:0007669"/>
    <property type="project" value="UniProtKB-KW"/>
</dbReference>
<dbReference type="GO" id="GO:0016702">
    <property type="term" value="F:oxidoreductase activity, acting on single donors with incorporation of molecular oxygen, incorporation of two atoms of oxygen"/>
    <property type="evidence" value="ECO:0007669"/>
    <property type="project" value="TreeGrafter"/>
</dbReference>
<dbReference type="GO" id="GO:0004601">
    <property type="term" value="F:peroxidase activity"/>
    <property type="evidence" value="ECO:0007669"/>
    <property type="project" value="UniProtKB-KW"/>
</dbReference>
<dbReference type="GO" id="GO:0004666">
    <property type="term" value="F:prostaglandin-endoperoxide synthase activity"/>
    <property type="evidence" value="ECO:0000250"/>
    <property type="project" value="UniProtKB"/>
</dbReference>
<dbReference type="GO" id="GO:0019371">
    <property type="term" value="P:cyclooxygenase pathway"/>
    <property type="evidence" value="ECO:0000250"/>
    <property type="project" value="UniProtKB"/>
</dbReference>
<dbReference type="GO" id="GO:0001516">
    <property type="term" value="P:prostaglandin biosynthetic process"/>
    <property type="evidence" value="ECO:0000250"/>
    <property type="project" value="UniProtKB"/>
</dbReference>
<dbReference type="GO" id="GO:0150077">
    <property type="term" value="P:regulation of neuroinflammatory response"/>
    <property type="evidence" value="ECO:0000250"/>
    <property type="project" value="UniProtKB"/>
</dbReference>
<dbReference type="GO" id="GO:0006979">
    <property type="term" value="P:response to oxidative stress"/>
    <property type="evidence" value="ECO:0007669"/>
    <property type="project" value="InterPro"/>
</dbReference>
<dbReference type="CDD" id="cd00054">
    <property type="entry name" value="EGF_CA"/>
    <property type="match status" value="1"/>
</dbReference>
<dbReference type="CDD" id="cd09816">
    <property type="entry name" value="prostaglandin_endoperoxide_synthase"/>
    <property type="match status" value="1"/>
</dbReference>
<dbReference type="FunFam" id="1.10.640.10:FF:000002">
    <property type="entry name" value="Prostaglandin G/H synthase 2"/>
    <property type="match status" value="1"/>
</dbReference>
<dbReference type="FunFam" id="2.10.25.10:FF:000235">
    <property type="entry name" value="Prostaglandin G/H synthase 2"/>
    <property type="match status" value="1"/>
</dbReference>
<dbReference type="Gene3D" id="1.10.640.10">
    <property type="entry name" value="Haem peroxidase domain superfamily, animal type"/>
    <property type="match status" value="1"/>
</dbReference>
<dbReference type="Gene3D" id="2.10.25.10">
    <property type="entry name" value="Laminin"/>
    <property type="match status" value="1"/>
</dbReference>
<dbReference type="InterPro" id="IPR000742">
    <property type="entry name" value="EGF-like_dom"/>
</dbReference>
<dbReference type="InterPro" id="IPR019791">
    <property type="entry name" value="Haem_peroxidase_animal"/>
</dbReference>
<dbReference type="InterPro" id="IPR010255">
    <property type="entry name" value="Haem_peroxidase_sf"/>
</dbReference>
<dbReference type="InterPro" id="IPR037120">
    <property type="entry name" value="Haem_peroxidase_sf_animal"/>
</dbReference>
<dbReference type="InterPro" id="IPR050783">
    <property type="entry name" value="Oxylipin_biosynth_metab"/>
</dbReference>
<dbReference type="PANTHER" id="PTHR11903">
    <property type="entry name" value="PROSTAGLANDIN G/H SYNTHASE"/>
    <property type="match status" value="1"/>
</dbReference>
<dbReference type="PANTHER" id="PTHR11903:SF8">
    <property type="entry name" value="PROSTAGLANDIN G_H SYNTHASE 2"/>
    <property type="match status" value="1"/>
</dbReference>
<dbReference type="Pfam" id="PF03098">
    <property type="entry name" value="An_peroxidase"/>
    <property type="match status" value="2"/>
</dbReference>
<dbReference type="Pfam" id="PF00008">
    <property type="entry name" value="EGF"/>
    <property type="match status" value="1"/>
</dbReference>
<dbReference type="PRINTS" id="PR00457">
    <property type="entry name" value="ANPEROXIDASE"/>
</dbReference>
<dbReference type="SUPFAM" id="SSF57196">
    <property type="entry name" value="EGF/Laminin"/>
    <property type="match status" value="1"/>
</dbReference>
<dbReference type="SUPFAM" id="SSF48113">
    <property type="entry name" value="Heme-dependent peroxidases"/>
    <property type="match status" value="1"/>
</dbReference>
<dbReference type="PROSITE" id="PS50026">
    <property type="entry name" value="EGF_3"/>
    <property type="match status" value="1"/>
</dbReference>
<dbReference type="PROSITE" id="PS50292">
    <property type="entry name" value="PEROXIDASE_3"/>
    <property type="match status" value="1"/>
</dbReference>
<reference key="1">
    <citation type="journal article" date="1998" name="Endocrinology">
        <title>Cloning, developmental expression, and immunohistochemistry of cyclooxygenase 2 in the endometrium during embryo implantation and gestation in the mink (Mustela vison).</title>
        <authorList>
            <person name="Song J.H."/>
            <person name="Sirois J."/>
            <person name="Houde A."/>
            <person name="Murphy B.D."/>
        </authorList>
    </citation>
    <scope>NUCLEOTIDE SEQUENCE [MRNA]</scope>
    <source>
        <tissue>Uterus</tissue>
    </source>
</reference>
<gene>
    <name type="primary">PTGS2</name>
    <name type="synonym">COX2</name>
</gene>
<sequence>MLARAGLLCASLSPPHAANPCCSNPCQNQGVCMSIGFDQYMCDCSRTGFYGENCSTPEFLTRVKLLLKPTPNTVHYILTHFKGVWNIVNKIPFLADVIMKYVRTSRSHCIEPPPTYNVHYAYKSWEAFSNLSYYTRALPPVADDCPTPMGVKGKKELPDSKEIVEKFLLRRKFIPDPQGTNMMFAFFAQHFTHQFFKTDHKRGPGFTKGLGHGVDLSHVYGETLDRQHKLRLFKDGKMKYQVIDGEVYPPTVKDTQVEMIYPPHVPEHLRFAVGQEVFGLVPGLMMYATIWLREHNRVCDVLKQEQGEWDDERLFRRSRLILIGETIKIVIEDYVRHLSGYHFSLKFDPELLFNQQFQYQNRIAAEFNTLYHWHPLLPDTLQIDDQEYNFQQFVYNNSILLEHGLTQFGESFSRQIAGRVAGGRNVPAAVQQEQRASIDQSRQMKYQSLNEYRKRFSVKPYASFEELTGEKEMAGELKALYQDIDAMELYPALLVEKPRPDAIFGETMVEIGAPFSLKGLMGNPICSPDYWKPSHFGGEVGFKIINTASIQSLICNNVKGCPFTAFSVQDPQLTKTVTINGSSSHSGLDDINPTVLLKERSTEL</sequence>
<organism>
    <name type="scientific">Neovison vison</name>
    <name type="common">American mink</name>
    <name type="synonym">Mustela vison</name>
    <dbReference type="NCBI Taxonomy" id="452646"/>
    <lineage>
        <taxon>Eukaryota</taxon>
        <taxon>Metazoa</taxon>
        <taxon>Chordata</taxon>
        <taxon>Craniata</taxon>
        <taxon>Vertebrata</taxon>
        <taxon>Euteleostomi</taxon>
        <taxon>Mammalia</taxon>
        <taxon>Eutheria</taxon>
        <taxon>Laurasiatheria</taxon>
        <taxon>Carnivora</taxon>
        <taxon>Caniformia</taxon>
        <taxon>Musteloidea</taxon>
        <taxon>Mustelidae</taxon>
        <taxon>Mustelinae</taxon>
        <taxon>Neogale</taxon>
    </lineage>
</organism>
<name>PGH2_NEOVI</name>
<keyword id="KW-0223">Dioxygenase</keyword>
<keyword id="KW-1015">Disulfide bond</keyword>
<keyword id="KW-0256">Endoplasmic reticulum</keyword>
<keyword id="KW-0275">Fatty acid biosynthesis</keyword>
<keyword id="KW-0276">Fatty acid metabolism</keyword>
<keyword id="KW-0325">Glycoprotein</keyword>
<keyword id="KW-0349">Heme</keyword>
<keyword id="KW-0408">Iron</keyword>
<keyword id="KW-0444">Lipid biosynthesis</keyword>
<keyword id="KW-0443">Lipid metabolism</keyword>
<keyword id="KW-0472">Membrane</keyword>
<keyword id="KW-0479">Metal-binding</keyword>
<keyword id="KW-0492">Microsome</keyword>
<keyword id="KW-0539">Nucleus</keyword>
<keyword id="KW-0560">Oxidoreductase</keyword>
<keyword id="KW-0575">Peroxidase</keyword>
<keyword id="KW-0643">Prostaglandin biosynthesis</keyword>
<keyword id="KW-0644">Prostaglandin metabolism</keyword>
<keyword id="KW-1185">Reference proteome</keyword>
<keyword id="KW-0702">S-nitrosylation</keyword>
<keyword id="KW-0732">Signal</keyword>
<evidence type="ECO:0000250" key="1"/>
<evidence type="ECO:0000250" key="2">
    <source>
        <dbReference type="UniProtKB" id="P35354"/>
    </source>
</evidence>
<evidence type="ECO:0000250" key="3">
    <source>
        <dbReference type="UniProtKB" id="P79208"/>
    </source>
</evidence>
<evidence type="ECO:0000250" key="4">
    <source>
        <dbReference type="UniProtKB" id="Q05769"/>
    </source>
</evidence>
<evidence type="ECO:0000255" key="5"/>
<evidence type="ECO:0000255" key="6">
    <source>
        <dbReference type="PROSITE-ProRule" id="PRU00076"/>
    </source>
</evidence>
<evidence type="ECO:0000255" key="7">
    <source>
        <dbReference type="PROSITE-ProRule" id="PRU00298"/>
    </source>
</evidence>
<evidence type="ECO:0000305" key="8"/>
<accession>O62725</accession>
<proteinExistence type="evidence at transcript level"/>
<protein>
    <recommendedName>
        <fullName>Prostaglandin G/H synthase 2</fullName>
        <ecNumber>1.14.99.1</ecNumber>
    </recommendedName>
    <alternativeName>
        <fullName>Cyclooxygenase-2</fullName>
        <shortName>COX-2</shortName>
    </alternativeName>
    <alternativeName>
        <fullName>PHS II</fullName>
    </alternativeName>
    <alternativeName>
        <fullName>Prostaglandin H2 synthase 2</fullName>
        <shortName>PGH synthase 2</shortName>
        <shortName>PGHS-2</shortName>
    </alternativeName>
    <alternativeName>
        <fullName>Prostaglandin-endoperoxide synthase 2</fullName>
    </alternativeName>
</protein>
<comment type="function">
    <text evidence="2 3 4">Dual cyclooxygenase and peroxidase in the biosynthesis pathway of prostanoids, a class of C20 oxylipins mainly derived from arachidonate ((5Z,8Z,11Z,14Z)-eicosatetraenoate, AA, C20:4(n-6)), with a particular role in the inflammatory response. The cyclooxygenase activity oxygenates AA to the hydroperoxy endoperoxide prostaglandin G2 (PGG2), and the peroxidase activity reduces PGG2 to the hydroxy endoperoxide prostaglandin H2 (PGH2), the precursor of all 2-series prostaglandins and thromboxanes. This complex transformation is initiated by abstraction of hydrogen at carbon 13 (with S-stereochemistry), followed by insertion of molecular O2 to form the endoperoxide bridge between carbon 9 and 11 that defines prostaglandins. The insertion of a second molecule of O2 (bis-oxygenase activity) yields a hydroperoxy group in PGG2 that is then reduced to PGH2 by two electrons. Similarly catalyzes successive cyclooxygenation and peroxidation of dihomo-gamma-linoleate (DGLA, C20:3(n-6)) and eicosapentaenoate (EPA, C20:5(n-3)) to corresponding PGH1 and PGH3, the precursors of 1- and 3-series prostaglandins. In an alternative pathway of prostanoid biosynthesis, converts 2-arachidonoyl lysophopholipids to prostanoid lysophopholipids, which are then hydrolyzed by intracellular phospholipases to release free prostanoids. Metabolizes 2-arachidonoyl glycerol yielding the glyceryl ester of PGH2, a process that can contribute to pain response. Generates lipid mediators from n-3 and n-6 polyunsaturated fatty acids (PUFAs) via a lipoxygenase-type mechanism. Oxygenates PUFAs to hydroperoxy compounds and then reduces them to corresponding alcohols. Plays a role in the generation of resolution phase interaction products (resolvins) during both sterile and infectious inflammation. Metabolizes docosahexaenoate (DHA, C22:6(n-3)) to 17R-HDHA, a precursor of the D-series resolvins (RvDs). As a component of the biosynthetic pathway of E-series resolvins (RvEs), converts eicosapentaenoate (EPA, C20:5(n-3)) primarily to 18S-HEPE that is further metabolized by ALOX5 and LTA4H to generate 18S-RvE1 and 18S-RvE2. In vascular endothelial cells, converts docosapentaenoate (DPA, C22:5(n-3)) to 13R-HDPA, a precursor for 13-series resolvins (RvTs) shown to activate macrophage phagocytosis during bacterial infection. In activated leukocytes, contributes to oxygenation of hydroxyeicosatetraenoates (HETE) to diHETES (5,15-diHETE and 5,11-diHETE). Can also use linoleate (LA, (9Z,12Z)-octadecadienoate, C18:2(n-6)) as substrate and produce hydroxyoctadecadienoates (HODEs) in a regio- and stereospecific manner, being (9R)-HODE ((9R)-hydroxy-(10E,12Z)-octadecadienoate) and (13S)-HODE ((13S)-hydroxy-(9Z,11E)-octadecadienoate) its major products (By similarity). During neuroinflammation, plays a role in neuronal secretion of specialized preresolving mediators (SPMs) 15R-lipoxin A4 that regulates phagocytic microglia (By similarity).</text>
</comment>
<comment type="catalytic activity">
    <reaction evidence="2">
        <text>(5Z,8Z,11Z,14Z)-eicosatetraenoate + AH2 + 2 O2 = prostaglandin H2 + A + H2O</text>
        <dbReference type="Rhea" id="RHEA:23728"/>
        <dbReference type="ChEBI" id="CHEBI:13193"/>
        <dbReference type="ChEBI" id="CHEBI:15377"/>
        <dbReference type="ChEBI" id="CHEBI:15379"/>
        <dbReference type="ChEBI" id="CHEBI:17499"/>
        <dbReference type="ChEBI" id="CHEBI:32395"/>
        <dbReference type="ChEBI" id="CHEBI:57405"/>
        <dbReference type="EC" id="1.14.99.1"/>
    </reaction>
    <physiologicalReaction direction="left-to-right" evidence="2">
        <dbReference type="Rhea" id="RHEA:23729"/>
    </physiologicalReaction>
</comment>
<comment type="catalytic activity">
    <reaction evidence="2">
        <text>(5Z,8Z,11Z,14Z)-eicosatetraenoate + 2 O2 = prostaglandin G2</text>
        <dbReference type="Rhea" id="RHEA:42596"/>
        <dbReference type="ChEBI" id="CHEBI:15379"/>
        <dbReference type="ChEBI" id="CHEBI:32395"/>
        <dbReference type="ChEBI" id="CHEBI:82629"/>
    </reaction>
    <physiologicalReaction direction="left-to-right" evidence="2">
        <dbReference type="Rhea" id="RHEA:42597"/>
    </physiologicalReaction>
</comment>
<comment type="catalytic activity">
    <reaction evidence="2">
        <text>prostaglandin G2 + AH2 = prostaglandin H2 + A + H2O</text>
        <dbReference type="Rhea" id="RHEA:42600"/>
        <dbReference type="ChEBI" id="CHEBI:13193"/>
        <dbReference type="ChEBI" id="CHEBI:15377"/>
        <dbReference type="ChEBI" id="CHEBI:17499"/>
        <dbReference type="ChEBI" id="CHEBI:57405"/>
        <dbReference type="ChEBI" id="CHEBI:82629"/>
    </reaction>
    <physiologicalReaction direction="left-to-right" evidence="2">
        <dbReference type="Rhea" id="RHEA:42601"/>
    </physiologicalReaction>
</comment>
<comment type="catalytic activity">
    <reaction evidence="2">
        <text>(5Z,8Z,11Z,14Z,17Z)-eicosapentaenoate + 2 O2 = prostaglandin G3</text>
        <dbReference type="Rhea" id="RHEA:50444"/>
        <dbReference type="ChEBI" id="CHEBI:15379"/>
        <dbReference type="ChEBI" id="CHEBI:58562"/>
        <dbReference type="ChEBI" id="CHEBI:133133"/>
    </reaction>
    <physiologicalReaction direction="left-to-right" evidence="2">
        <dbReference type="Rhea" id="RHEA:50445"/>
    </physiologicalReaction>
</comment>
<comment type="catalytic activity">
    <reaction evidence="2">
        <text>prostaglandin G3 + AH2 = prostaglandin H3 + A + H2O</text>
        <dbReference type="Rhea" id="RHEA:50448"/>
        <dbReference type="ChEBI" id="CHEBI:13193"/>
        <dbReference type="ChEBI" id="CHEBI:15377"/>
        <dbReference type="ChEBI" id="CHEBI:17499"/>
        <dbReference type="ChEBI" id="CHEBI:133133"/>
        <dbReference type="ChEBI" id="CHEBI:133134"/>
    </reaction>
    <physiologicalReaction direction="left-to-right" evidence="2">
        <dbReference type="Rhea" id="RHEA:50449"/>
    </physiologicalReaction>
</comment>
<comment type="catalytic activity">
    <reaction evidence="2">
        <text>(8Z,11Z,14Z)-eicosatrienoate + 2 O2 = prostaglandin G1</text>
        <dbReference type="Rhea" id="RHEA:50424"/>
        <dbReference type="ChEBI" id="CHEBI:15379"/>
        <dbReference type="ChEBI" id="CHEBI:71589"/>
        <dbReference type="ChEBI" id="CHEBI:133084"/>
    </reaction>
    <physiologicalReaction direction="left-to-right" evidence="2">
        <dbReference type="Rhea" id="RHEA:50425"/>
    </physiologicalReaction>
</comment>
<comment type="catalytic activity">
    <reaction evidence="2">
        <text>prostaglandin G1 + AH2 = prostaglandin H1 + A + H2O</text>
        <dbReference type="Rhea" id="RHEA:50432"/>
        <dbReference type="ChEBI" id="CHEBI:13193"/>
        <dbReference type="ChEBI" id="CHEBI:15377"/>
        <dbReference type="ChEBI" id="CHEBI:17499"/>
        <dbReference type="ChEBI" id="CHEBI:90793"/>
        <dbReference type="ChEBI" id="CHEBI:133084"/>
    </reaction>
    <physiologicalReaction direction="left-to-right" evidence="2">
        <dbReference type="Rhea" id="RHEA:50433"/>
    </physiologicalReaction>
</comment>
<comment type="catalytic activity">
    <reaction evidence="2">
        <text>2-(5Z,8Z,11Z,14Z)-eicosatetraenoyl-sn-glycero-3-phosphoethanolamine + 2 O2 = 2-(prostaglandin G2)-sn-glycero-3-phosphoethanolamine</text>
        <dbReference type="Rhea" id="RHEA:54204"/>
        <dbReference type="ChEBI" id="CHEBI:15379"/>
        <dbReference type="ChEBI" id="CHEBI:76091"/>
        <dbReference type="ChEBI" id="CHEBI:138098"/>
    </reaction>
    <physiologicalReaction direction="left-to-right" evidence="2">
        <dbReference type="Rhea" id="RHEA:54205"/>
    </physiologicalReaction>
</comment>
<comment type="catalytic activity">
    <reaction evidence="2">
        <text>2-(prostaglandin G2)-sn-glycero-3-phosphoethanolamine + AH2 = 2-(prostaglandin H2)-sn-glycero-3-phosphoethanolamine + A + H2O</text>
        <dbReference type="Rhea" id="RHEA:54208"/>
        <dbReference type="ChEBI" id="CHEBI:13193"/>
        <dbReference type="ChEBI" id="CHEBI:15377"/>
        <dbReference type="ChEBI" id="CHEBI:17499"/>
        <dbReference type="ChEBI" id="CHEBI:138098"/>
        <dbReference type="ChEBI" id="CHEBI:138099"/>
    </reaction>
    <physiologicalReaction direction="left-to-right" evidence="2">
        <dbReference type="Rhea" id="RHEA:54209"/>
    </physiologicalReaction>
</comment>
<comment type="catalytic activity">
    <reaction evidence="2">
        <text>2-(5Z,8Z,11Z,14Z)-eicosatetraenoyl-sn-glycero-3-phosphocholine + 2 O2 = 2-(prostaglandin G2)-sn-glycero-3-phosphocholine</text>
        <dbReference type="Rhea" id="RHEA:54212"/>
        <dbReference type="ChEBI" id="CHEBI:15379"/>
        <dbReference type="ChEBI" id="CHEBI:76079"/>
        <dbReference type="ChEBI" id="CHEBI:138100"/>
    </reaction>
    <physiologicalReaction direction="left-to-right" evidence="2">
        <dbReference type="Rhea" id="RHEA:54213"/>
    </physiologicalReaction>
</comment>
<comment type="catalytic activity">
    <reaction evidence="2">
        <text>2-(prostaglandin G2)-sn-glycero-3-phosphocholine + AH2 = 2-(prostaglandin H2)-sn-glycero-3-phosphocholine + A + H2O</text>
        <dbReference type="Rhea" id="RHEA:54216"/>
        <dbReference type="ChEBI" id="CHEBI:13193"/>
        <dbReference type="ChEBI" id="CHEBI:15377"/>
        <dbReference type="ChEBI" id="CHEBI:17499"/>
        <dbReference type="ChEBI" id="CHEBI:138100"/>
        <dbReference type="ChEBI" id="CHEBI:138101"/>
    </reaction>
    <physiologicalReaction direction="left-to-right" evidence="2">
        <dbReference type="Rhea" id="RHEA:54217"/>
    </physiologicalReaction>
</comment>
<comment type="catalytic activity">
    <reaction evidence="2">
        <text>(15S)-hydroperoxy-(5Z,8Z,11Z,13E)-eicosatetraenoate + AH2 = (15S)-hydroxy-(5Z,8Z,11Z,13E)-eicosatetraenoate + A + H2O</text>
        <dbReference type="Rhea" id="RHEA:48856"/>
        <dbReference type="ChEBI" id="CHEBI:13193"/>
        <dbReference type="ChEBI" id="CHEBI:15377"/>
        <dbReference type="ChEBI" id="CHEBI:17499"/>
        <dbReference type="ChEBI" id="CHEBI:57409"/>
        <dbReference type="ChEBI" id="CHEBI:57446"/>
    </reaction>
    <physiologicalReaction direction="left-to-right" evidence="2">
        <dbReference type="Rhea" id="RHEA:48857"/>
    </physiologicalReaction>
</comment>
<comment type="catalytic activity">
    <reaction evidence="2">
        <text>2-(5Z,8Z,11Z,14Z)-eicosatetraenoyl-sn-glycero-3-phosphocholine + AH2 + O2 = 2-[(15S)-hydroxy-(5Z,8Z,11Z,13E)-eicosatetraenoyl]-sn-glycero-3-phosphocholine + A + H2O</text>
        <dbReference type="Rhea" id="RHEA:53684"/>
        <dbReference type="ChEBI" id="CHEBI:13193"/>
        <dbReference type="ChEBI" id="CHEBI:15377"/>
        <dbReference type="ChEBI" id="CHEBI:15379"/>
        <dbReference type="ChEBI" id="CHEBI:17499"/>
        <dbReference type="ChEBI" id="CHEBI:76079"/>
        <dbReference type="ChEBI" id="CHEBI:137584"/>
    </reaction>
    <physiologicalReaction direction="left-to-right" evidence="2">
        <dbReference type="Rhea" id="RHEA:53685"/>
    </physiologicalReaction>
</comment>
<comment type="catalytic activity">
    <reaction evidence="2">
        <text>2-(5Z,8Z,11Z,14Z)-eicosatetraenoyl-sn-glycero-3-phosphocholine + AH2 + O2 = 2-[(15R)-hydroxy-(5Z,8Z,11Z,13E)-eicosatetraenoyl]-sn-glycero-3-phosphocholine + A + H2O</text>
        <dbReference type="Rhea" id="RHEA:53680"/>
        <dbReference type="ChEBI" id="CHEBI:13193"/>
        <dbReference type="ChEBI" id="CHEBI:15377"/>
        <dbReference type="ChEBI" id="CHEBI:15379"/>
        <dbReference type="ChEBI" id="CHEBI:17499"/>
        <dbReference type="ChEBI" id="CHEBI:76079"/>
        <dbReference type="ChEBI" id="CHEBI:137583"/>
    </reaction>
    <physiologicalReaction direction="left-to-right" evidence="2">
        <dbReference type="Rhea" id="RHEA:53681"/>
    </physiologicalReaction>
</comment>
<comment type="catalytic activity">
    <reaction evidence="2">
        <text>2-(5Z,8Z,11Z,14Z)-eicosatetraenoyl-sn-glycero-3-phosphocholine + AH2 + O2 = 2-[(11R)-hydroxy-(5Z,8Z,12E,14Z)-eicosatetraenoyl]-sn-glycero-3-phosphocholine + A + H2O</text>
        <dbReference type="Rhea" id="RHEA:53676"/>
        <dbReference type="ChEBI" id="CHEBI:13193"/>
        <dbReference type="ChEBI" id="CHEBI:15377"/>
        <dbReference type="ChEBI" id="CHEBI:15379"/>
        <dbReference type="ChEBI" id="CHEBI:17499"/>
        <dbReference type="ChEBI" id="CHEBI:76079"/>
        <dbReference type="ChEBI" id="CHEBI:137582"/>
    </reaction>
    <physiologicalReaction direction="left-to-right" evidence="2">
        <dbReference type="Rhea" id="RHEA:53677"/>
    </physiologicalReaction>
</comment>
<comment type="catalytic activity">
    <reaction evidence="2">
        <text>(9Z,12Z)-octadecadienoate + AH2 + O2 = 9-hydroxy-(10E,12Z)-octadecadienoate + A + H2O</text>
        <dbReference type="Rhea" id="RHEA:50864"/>
        <dbReference type="ChEBI" id="CHEBI:13193"/>
        <dbReference type="ChEBI" id="CHEBI:15377"/>
        <dbReference type="ChEBI" id="CHEBI:15379"/>
        <dbReference type="ChEBI" id="CHEBI:17499"/>
        <dbReference type="ChEBI" id="CHEBI:30245"/>
        <dbReference type="ChEBI" id="CHEBI:133820"/>
    </reaction>
    <physiologicalReaction direction="left-to-right" evidence="2">
        <dbReference type="Rhea" id="RHEA:50865"/>
    </physiologicalReaction>
</comment>
<comment type="catalytic activity">
    <reaction evidence="2">
        <text>(9Z,12Z)-octadecadienoate + AH2 + O2 = 13-hydroxy-(9Z,11E)-octadecadienoate + A + H2O</text>
        <dbReference type="Rhea" id="RHEA:50860"/>
        <dbReference type="ChEBI" id="CHEBI:13193"/>
        <dbReference type="ChEBI" id="CHEBI:15377"/>
        <dbReference type="ChEBI" id="CHEBI:15379"/>
        <dbReference type="ChEBI" id="CHEBI:17499"/>
        <dbReference type="ChEBI" id="CHEBI:30245"/>
        <dbReference type="ChEBI" id="CHEBI:133819"/>
    </reaction>
    <physiologicalReaction direction="left-to-right" evidence="2">
        <dbReference type="Rhea" id="RHEA:50861"/>
    </physiologicalReaction>
</comment>
<comment type="catalytic activity">
    <reaction evidence="2">
        <text>(5Z,8Z,11Z,14Z)-eicosatetraenoate + AH2 + O2 = (15R)-hydroxy-(5Z,8Z,11Z,13E)-eicosatetraenoate + A + H2O</text>
        <dbReference type="Rhea" id="RHEA:50856"/>
        <dbReference type="ChEBI" id="CHEBI:13193"/>
        <dbReference type="ChEBI" id="CHEBI:15377"/>
        <dbReference type="ChEBI" id="CHEBI:15379"/>
        <dbReference type="ChEBI" id="CHEBI:17499"/>
        <dbReference type="ChEBI" id="CHEBI:32395"/>
        <dbReference type="ChEBI" id="CHEBI:78837"/>
    </reaction>
    <physiologicalReaction direction="left-to-right" evidence="2">
        <dbReference type="Rhea" id="RHEA:50857"/>
    </physiologicalReaction>
</comment>
<comment type="catalytic activity">
    <reaction evidence="2">
        <text>(5Z,8Z,11Z,14Z)-eicosatetraenoate + AH2 + O2 = (11R)-hydroxy-(5Z,8Z,12E,14Z)-eicosatetraenoate + A + H2O</text>
        <dbReference type="Rhea" id="RHEA:50852"/>
        <dbReference type="ChEBI" id="CHEBI:13193"/>
        <dbReference type="ChEBI" id="CHEBI:15377"/>
        <dbReference type="ChEBI" id="CHEBI:15379"/>
        <dbReference type="ChEBI" id="CHEBI:17499"/>
        <dbReference type="ChEBI" id="CHEBI:32395"/>
        <dbReference type="ChEBI" id="CHEBI:78836"/>
    </reaction>
    <physiologicalReaction direction="left-to-right" evidence="2">
        <dbReference type="Rhea" id="RHEA:50853"/>
    </physiologicalReaction>
</comment>
<comment type="catalytic activity">
    <reaction evidence="2">
        <text>(5Z,8Z,11Z,14Z,17Z)-eicosapentaenoate + AH2 + O2 = (11R)-hydroxy-(5Z,8Z,12E,14Z,17Z)-eicosapentaenoate + A + H2O</text>
        <dbReference type="Rhea" id="RHEA:50848"/>
        <dbReference type="ChEBI" id="CHEBI:13193"/>
        <dbReference type="ChEBI" id="CHEBI:15377"/>
        <dbReference type="ChEBI" id="CHEBI:15379"/>
        <dbReference type="ChEBI" id="CHEBI:17499"/>
        <dbReference type="ChEBI" id="CHEBI:58562"/>
        <dbReference type="ChEBI" id="CHEBI:90820"/>
    </reaction>
    <physiologicalReaction direction="left-to-right" evidence="2">
        <dbReference type="Rhea" id="RHEA:50849"/>
    </physiologicalReaction>
</comment>
<comment type="catalytic activity">
    <reaction evidence="2">
        <text>(5Z,8Z,11Z,14Z,17Z)-eicosapentaenoate + AH2 + O2 = (18S)-hydroxy-(5Z,8Z,11Z,14Z,16E)-eicosapentaenoate + A + H2O</text>
        <dbReference type="Rhea" id="RHEA:50200"/>
        <dbReference type="ChEBI" id="CHEBI:13193"/>
        <dbReference type="ChEBI" id="CHEBI:15377"/>
        <dbReference type="ChEBI" id="CHEBI:15379"/>
        <dbReference type="ChEBI" id="CHEBI:17499"/>
        <dbReference type="ChEBI" id="CHEBI:58562"/>
        <dbReference type="ChEBI" id="CHEBI:132083"/>
    </reaction>
    <physiologicalReaction direction="left-to-right" evidence="2">
        <dbReference type="Rhea" id="RHEA:50201"/>
    </physiologicalReaction>
</comment>
<comment type="catalytic activity">
    <reaction evidence="2">
        <text>(5Z,8Z,11Z,14Z,17Z)-eicosapentaenoate + AH2 + O2 = (18R)-hydroxy-(5Z,8Z,11Z,14Z,16E)-eicosapentaenoate + A + H2O</text>
        <dbReference type="Rhea" id="RHEA:48836"/>
        <dbReference type="ChEBI" id="CHEBI:13193"/>
        <dbReference type="ChEBI" id="CHEBI:15377"/>
        <dbReference type="ChEBI" id="CHEBI:15379"/>
        <dbReference type="ChEBI" id="CHEBI:17499"/>
        <dbReference type="ChEBI" id="CHEBI:58562"/>
        <dbReference type="ChEBI" id="CHEBI:90818"/>
    </reaction>
    <physiologicalReaction direction="left-to-right" evidence="2">
        <dbReference type="Rhea" id="RHEA:48837"/>
    </physiologicalReaction>
</comment>
<comment type="catalytic activity">
    <reaction evidence="2">
        <text>(5Z,8Z,11Z,14Z,17Z)-eicosapentaenoate + AH2 + O2 = (15R)-hydroxy-(5Z,8Z,11Z,13E,17Z)-eicosapentaenoate + A + H2O</text>
        <dbReference type="Rhea" id="RHEA:48840"/>
        <dbReference type="ChEBI" id="CHEBI:13193"/>
        <dbReference type="ChEBI" id="CHEBI:15377"/>
        <dbReference type="ChEBI" id="CHEBI:15379"/>
        <dbReference type="ChEBI" id="CHEBI:17499"/>
        <dbReference type="ChEBI" id="CHEBI:58562"/>
        <dbReference type="ChEBI" id="CHEBI:90819"/>
    </reaction>
    <physiologicalReaction direction="left-to-right" evidence="2">
        <dbReference type="Rhea" id="RHEA:48841"/>
    </physiologicalReaction>
</comment>
<comment type="catalytic activity">
    <reaction evidence="2">
        <text>(5Z,8Z,11Z,14Z,17Z)-eicosapentaenoate + AH2 + O2 = (15S)-hydroxy-(5Z,8Z,11Z,13E,17Z)-eicosapentaenoate + A + H2O</text>
        <dbReference type="Rhea" id="RHEA:50196"/>
        <dbReference type="ChEBI" id="CHEBI:13193"/>
        <dbReference type="ChEBI" id="CHEBI:15377"/>
        <dbReference type="ChEBI" id="CHEBI:15379"/>
        <dbReference type="ChEBI" id="CHEBI:17499"/>
        <dbReference type="ChEBI" id="CHEBI:58562"/>
        <dbReference type="ChEBI" id="CHEBI:132087"/>
    </reaction>
    <physiologicalReaction direction="left-to-right" evidence="2">
        <dbReference type="Rhea" id="RHEA:50197"/>
    </physiologicalReaction>
</comment>
<comment type="catalytic activity">
    <reaction evidence="2">
        <text>(7Z,10Z,13Z,16Z,19Z)-docosapentaenoate + AH2 + O2 = 13R-hydroxy-(7Z,10Z,14E,16Z,19Z)-docosapentaenoate + A + H2O</text>
        <dbReference type="Rhea" id="RHEA:48852"/>
        <dbReference type="ChEBI" id="CHEBI:13193"/>
        <dbReference type="ChEBI" id="CHEBI:15377"/>
        <dbReference type="ChEBI" id="CHEBI:15379"/>
        <dbReference type="ChEBI" id="CHEBI:17499"/>
        <dbReference type="ChEBI" id="CHEBI:77224"/>
        <dbReference type="ChEBI" id="CHEBI:90824"/>
    </reaction>
    <physiologicalReaction direction="left-to-right" evidence="2">
        <dbReference type="Rhea" id="RHEA:48853"/>
    </physiologicalReaction>
</comment>
<comment type="catalytic activity">
    <reaction evidence="2">
        <text>(4Z,7Z,10Z,13Z,16Z,19Z)-docosahexaenoate + AH2 + O2 = 13-hydroxy-(4Z,7Z,10Z,14E,16Z,19Z)-docosahexaenoate + A + H2O</text>
        <dbReference type="Rhea" id="RHEA:48820"/>
        <dbReference type="ChEBI" id="CHEBI:13193"/>
        <dbReference type="ChEBI" id="CHEBI:15377"/>
        <dbReference type="ChEBI" id="CHEBI:15379"/>
        <dbReference type="ChEBI" id="CHEBI:17499"/>
        <dbReference type="ChEBI" id="CHEBI:77016"/>
        <dbReference type="ChEBI" id="CHEBI:90815"/>
    </reaction>
    <physiologicalReaction direction="left-to-right" evidence="2">
        <dbReference type="Rhea" id="RHEA:48821"/>
    </physiologicalReaction>
</comment>
<comment type="catalytic activity">
    <reaction evidence="2">
        <text>(5S)-hydroxy-(6E,8Z,11Z,14Z)-eicosatetraenoate + AH2 + O2 = (5S,15R)-dihydroxy-(6E,8Z,11Z,13E)-eicosatetraenoate + A + H2O</text>
        <dbReference type="Rhea" id="RHEA:48812"/>
        <dbReference type="ChEBI" id="CHEBI:13193"/>
        <dbReference type="ChEBI" id="CHEBI:15377"/>
        <dbReference type="ChEBI" id="CHEBI:15379"/>
        <dbReference type="ChEBI" id="CHEBI:17499"/>
        <dbReference type="ChEBI" id="CHEBI:90632"/>
        <dbReference type="ChEBI" id="CHEBI:90812"/>
    </reaction>
    <physiologicalReaction direction="left-to-right" evidence="2">
        <dbReference type="Rhea" id="RHEA:48813"/>
    </physiologicalReaction>
</comment>
<comment type="catalytic activity">
    <reaction evidence="2">
        <text>(4Z,7Z,10Z,13Z,16Z,19Z)-docosahexaenoate + AH2 + O2 = 17R-hydroxy-(4Z,7Z,10Z,13Z,15E,19Z)-docosahexaenoate + A + H2O</text>
        <dbReference type="Rhea" id="RHEA:48816"/>
        <dbReference type="ChEBI" id="CHEBI:13193"/>
        <dbReference type="ChEBI" id="CHEBI:15377"/>
        <dbReference type="ChEBI" id="CHEBI:15379"/>
        <dbReference type="ChEBI" id="CHEBI:17499"/>
        <dbReference type="ChEBI" id="CHEBI:77016"/>
        <dbReference type="ChEBI" id="CHEBI:90814"/>
    </reaction>
    <physiologicalReaction direction="left-to-right" evidence="2">
        <dbReference type="Rhea" id="RHEA:48817"/>
    </physiologicalReaction>
</comment>
<comment type="catalytic activity">
    <reaction evidence="2">
        <text>(5S)-hydroxy-(6E,8Z,11Z,14Z)-eicosatetraenoate + AH2 + O2 = (5S,15S)-dihydroxy-(6E,8Z,11Z,13E)-eicosatetraenoate + A + H2O</text>
        <dbReference type="Rhea" id="RHEA:48808"/>
        <dbReference type="ChEBI" id="CHEBI:13193"/>
        <dbReference type="ChEBI" id="CHEBI:15377"/>
        <dbReference type="ChEBI" id="CHEBI:15379"/>
        <dbReference type="ChEBI" id="CHEBI:17499"/>
        <dbReference type="ChEBI" id="CHEBI:90632"/>
        <dbReference type="ChEBI" id="CHEBI:90813"/>
    </reaction>
    <physiologicalReaction direction="left-to-right" evidence="2">
        <dbReference type="Rhea" id="RHEA:48809"/>
    </physiologicalReaction>
</comment>
<comment type="catalytic activity">
    <reaction evidence="2">
        <text>(5S)-hydroxy-(6E,8Z,11Z,14Z)-eicosatetraenoate + AH2 + O2 = (5S,11R)-dihydroxy-(6E,8Z,12E,14Z)-eicosatetraenoate + A + H2O</text>
        <dbReference type="Rhea" id="RHEA:48804"/>
        <dbReference type="ChEBI" id="CHEBI:13193"/>
        <dbReference type="ChEBI" id="CHEBI:15377"/>
        <dbReference type="ChEBI" id="CHEBI:15379"/>
        <dbReference type="ChEBI" id="CHEBI:17499"/>
        <dbReference type="ChEBI" id="CHEBI:90632"/>
        <dbReference type="ChEBI" id="CHEBI:90810"/>
    </reaction>
    <physiologicalReaction direction="left-to-right" evidence="2">
        <dbReference type="Rhea" id="RHEA:48805"/>
    </physiologicalReaction>
</comment>
<comment type="catalytic activity">
    <reaction evidence="2">
        <text>2-(5Z,8Z,11Z,14Z-eicosatetraenoyl)-glycerol + 2 O2 = 2-glyceryl-prostaglandin G2</text>
        <dbReference type="Rhea" id="RHEA:45288"/>
        <dbReference type="ChEBI" id="CHEBI:15379"/>
        <dbReference type="ChEBI" id="CHEBI:52392"/>
        <dbReference type="ChEBI" id="CHEBI:85165"/>
    </reaction>
    <physiologicalReaction direction="left-to-right" evidence="2">
        <dbReference type="Rhea" id="RHEA:45289"/>
    </physiologicalReaction>
</comment>
<comment type="catalytic activity">
    <reaction evidence="2">
        <text>2-glyceryl-prostaglandin G2 + AH2 = 2-glyceryl-prostaglandin H2 + A + H2O</text>
        <dbReference type="Rhea" id="RHEA:45292"/>
        <dbReference type="ChEBI" id="CHEBI:13193"/>
        <dbReference type="ChEBI" id="CHEBI:15377"/>
        <dbReference type="ChEBI" id="CHEBI:17499"/>
        <dbReference type="ChEBI" id="CHEBI:85165"/>
        <dbReference type="ChEBI" id="CHEBI:85166"/>
    </reaction>
    <physiologicalReaction direction="left-to-right" evidence="2">
        <dbReference type="Rhea" id="RHEA:45293"/>
    </physiologicalReaction>
</comment>
<comment type="catalytic activity">
    <reaction evidence="2">
        <text>(5Z,8Z,11Z,14Z)-eicosatetraenoate + O2 = (15R)-hydroperoxy-(5Z,8Z,11Z,13E)-eicosatetraenoate</text>
        <dbReference type="Rhea" id="RHEA:42284"/>
        <dbReference type="ChEBI" id="CHEBI:15379"/>
        <dbReference type="ChEBI" id="CHEBI:32395"/>
        <dbReference type="ChEBI" id="CHEBI:82626"/>
    </reaction>
    <physiologicalReaction direction="left-to-right" evidence="2">
        <dbReference type="Rhea" id="RHEA:42285"/>
    </physiologicalReaction>
</comment>
<comment type="catalytic activity">
    <reaction evidence="2">
        <text>(5Z,8Z,11Z,14Z)-eicosatetraenoate + O2 = 11R-hydroperoxy-(5Z,8Z,12E,14Z)-eicosatetraenoate</text>
        <dbReference type="Rhea" id="RHEA:42280"/>
        <dbReference type="ChEBI" id="CHEBI:15379"/>
        <dbReference type="ChEBI" id="CHEBI:32395"/>
        <dbReference type="ChEBI" id="CHEBI:82628"/>
    </reaction>
    <physiologicalReaction direction="left-to-right" evidence="2">
        <dbReference type="Rhea" id="RHEA:42281"/>
    </physiologicalReaction>
</comment>
<comment type="catalytic activity">
    <reaction evidence="3">
        <text>(9Z,12Z)-octadecadienoate + AH2 + O2 = (9R)-hydroxy-(10E,12Z)-octadecadienoate + A + H2O</text>
        <dbReference type="Rhea" id="RHEA:75447"/>
        <dbReference type="ChEBI" id="CHEBI:13193"/>
        <dbReference type="ChEBI" id="CHEBI:15377"/>
        <dbReference type="ChEBI" id="CHEBI:15379"/>
        <dbReference type="ChEBI" id="CHEBI:17499"/>
        <dbReference type="ChEBI" id="CHEBI:30245"/>
        <dbReference type="ChEBI" id="CHEBI:77895"/>
    </reaction>
    <physiologicalReaction direction="left-to-right" evidence="3">
        <dbReference type="Rhea" id="RHEA:75448"/>
    </physiologicalReaction>
</comment>
<comment type="catalytic activity">
    <reaction evidence="3">
        <text>(9Z,12Z)-octadecadienoate + AH2 + O2 = (9S)-hydroxy-(10E,12Z)-octadecadienoate + A + H2O</text>
        <dbReference type="Rhea" id="RHEA:75459"/>
        <dbReference type="ChEBI" id="CHEBI:13193"/>
        <dbReference type="ChEBI" id="CHEBI:15377"/>
        <dbReference type="ChEBI" id="CHEBI:15379"/>
        <dbReference type="ChEBI" id="CHEBI:17499"/>
        <dbReference type="ChEBI" id="CHEBI:30245"/>
        <dbReference type="ChEBI" id="CHEBI:77852"/>
    </reaction>
    <physiologicalReaction direction="left-to-right" evidence="3">
        <dbReference type="Rhea" id="RHEA:75460"/>
    </physiologicalReaction>
</comment>
<comment type="catalytic activity">
    <reaction evidence="3">
        <text>(9Z,12Z)-octadecadienoate + AH2 + O2 = (13S)-hydroxy-(9Z,11E)-octadecadienoate + A + H2O</text>
        <dbReference type="Rhea" id="RHEA:75451"/>
        <dbReference type="ChEBI" id="CHEBI:13193"/>
        <dbReference type="ChEBI" id="CHEBI:15377"/>
        <dbReference type="ChEBI" id="CHEBI:15379"/>
        <dbReference type="ChEBI" id="CHEBI:17499"/>
        <dbReference type="ChEBI" id="CHEBI:30245"/>
        <dbReference type="ChEBI" id="CHEBI:90850"/>
    </reaction>
    <physiologicalReaction direction="left-to-right" evidence="3">
        <dbReference type="Rhea" id="RHEA:75452"/>
    </physiologicalReaction>
</comment>
<comment type="catalytic activity">
    <reaction evidence="3">
        <text>(9Z,12Z)-octadecadienoate + AH2 + O2 = (13R)-hydroxy-(9Z,11E)-octadecadienoate + A + H2O</text>
        <dbReference type="Rhea" id="RHEA:75455"/>
        <dbReference type="ChEBI" id="CHEBI:13193"/>
        <dbReference type="ChEBI" id="CHEBI:15377"/>
        <dbReference type="ChEBI" id="CHEBI:15379"/>
        <dbReference type="ChEBI" id="CHEBI:17499"/>
        <dbReference type="ChEBI" id="CHEBI:30245"/>
        <dbReference type="ChEBI" id="CHEBI:136655"/>
    </reaction>
    <physiologicalReaction direction="left-to-right" evidence="3">
        <dbReference type="Rhea" id="RHEA:75456"/>
    </physiologicalReaction>
</comment>
<comment type="cofactor">
    <cofactor evidence="4">
        <name>heme b</name>
        <dbReference type="ChEBI" id="CHEBI:60344"/>
    </cofactor>
    <text evidence="4">Binds 1 heme b (iron(II)-protoporphyrin IX) group per subunit.</text>
</comment>
<comment type="pathway">
    <text evidence="2">Lipid metabolism; prostaglandin biosynthesis.</text>
</comment>
<comment type="subunit">
    <text evidence="4">Homodimer.</text>
</comment>
<comment type="subcellular location">
    <subcellularLocation>
        <location evidence="2">Microsome membrane</location>
        <topology evidence="2">Peripheral membrane protein</topology>
    </subcellularLocation>
    <subcellularLocation>
        <location evidence="2">Endoplasmic reticulum membrane</location>
        <topology evidence="2">Peripheral membrane protein</topology>
    </subcellularLocation>
    <subcellularLocation>
        <location evidence="2">Nucleus inner membrane</location>
        <topology evidence="2">Peripheral membrane protein</topology>
    </subcellularLocation>
    <subcellularLocation>
        <location evidence="2">Nucleus outer membrane</location>
        <topology evidence="2">Peripheral membrane protein</topology>
    </subcellularLocation>
    <text evidence="2">Detected on the lumenal side of the endoplasmic reticulum and nuclear envelope.</text>
</comment>
<comment type="PTM">
    <text evidence="2">S-nitrosylation by NOS2 (iNOS) activates enzyme activity. S-nitrosylation may take place on different Cys residues in addition to Cys-526.</text>
</comment>
<comment type="miscellaneous">
    <text>The conversion of arachidonate to prostaglandin H2 is a 2 step reaction: a cyclooxygenase (COX) reaction which converts arachidonate to prostaglandin G2 (PGG2) and a peroxidase reaction in which PGG2 is reduced to prostaglandin H2 (PGH2). The cyclooxygenase reaction occurs in a hydrophobic channel in the core of the enzyme. The peroxidase reaction occurs at a heme-containing active site located near the protein surface. The nonsteroidal anti-inflammatory drugs (NSAIDs) binding site corresponds to the cyclooxygenase active site.</text>
</comment>
<comment type="miscellaneous">
    <text>Conversion of arachidonate to prostaglandin H2 is mediated by 2 different isozymes: the constitutive PTGS1 and the inducible PTGS2. PTGS1 is expressed constitutively and generally produces prostanoids acutely in response to hormonal stimuli to fine-tune physiological processes requiring instantaneous, continuous regulation (e.g. hemostasis). PTGS2 is inducible and typically produces prostanoids that mediate responses to physiological stresses such as infection and inflammation.</text>
</comment>
<comment type="miscellaneous">
    <text>PTGS1 and PTGS2 are the targets of nonsteroidal anti-inflammatory drugs (NSAIDs) including aspirin and ibuprofen. Aspirin is able to produce an irreversible inactivation of the enzyme through a serine acetylation. Inhibition of the PGHSs with NSAIDs acutely reduces inflammation, pain, and fever, and long-term use of these drugs reduces fatal thrombotic events, as well as the development of colon cancer and Alzheimer's disease. PTGS2 is the principal isozyme responsible for production of inflammatory prostaglandins. New generation PTGSs inhibitors strive to be selective for PTGS2, to avoid side effects such as gastrointestinal complications and ulceration.</text>
</comment>
<comment type="similarity">
    <text evidence="8">Belongs to the prostaglandin G/H synthase family.</text>
</comment>
<feature type="signal peptide" evidence="1">
    <location>
        <begin position="1"/>
        <end position="17"/>
    </location>
</feature>
<feature type="chain" id="PRO_0000023877" description="Prostaglandin G/H synthase 2">
    <location>
        <begin position="18"/>
        <end position="604"/>
    </location>
</feature>
<feature type="domain" description="EGF-like" evidence="6">
    <location>
        <begin position="18"/>
        <end position="55"/>
    </location>
</feature>
<feature type="active site" description="Proton acceptor" evidence="7">
    <location>
        <position position="193"/>
    </location>
</feature>
<feature type="active site" description="For cyclooxygenase activity" evidence="4">
    <location>
        <position position="371"/>
    </location>
</feature>
<feature type="binding site" evidence="4">
    <location>
        <position position="106"/>
    </location>
    <ligand>
        <name>substrate</name>
    </ligand>
</feature>
<feature type="binding site" evidence="4">
    <location>
        <position position="341"/>
    </location>
    <ligand>
        <name>substrate</name>
    </ligand>
</feature>
<feature type="binding site" description="axial binding residue" evidence="7">
    <location>
        <position position="374"/>
    </location>
    <ligand>
        <name>heme b</name>
        <dbReference type="ChEBI" id="CHEBI:60344"/>
    </ligand>
    <ligandPart>
        <name>Fe</name>
        <dbReference type="ChEBI" id="CHEBI:18248"/>
    </ligandPart>
</feature>
<feature type="site" description="Aspirin-acetylated serine" evidence="2">
    <location>
        <position position="516"/>
    </location>
</feature>
<feature type="modified residue" description="S-nitrosocysteine" evidence="2">
    <location>
        <position position="526"/>
    </location>
</feature>
<feature type="glycosylation site" description="N-linked (GlcNAc...) asparagine" evidence="5">
    <location>
        <position position="53"/>
    </location>
</feature>
<feature type="glycosylation site" description="N-linked (GlcNAc...) asparagine" evidence="5">
    <location>
        <position position="130"/>
    </location>
</feature>
<feature type="glycosylation site" description="N-linked (GlcNAc...) asparagine" evidence="5">
    <location>
        <position position="396"/>
    </location>
</feature>
<feature type="glycosylation site" description="N-linked (GlcNAc...) asparagine" evidence="5">
    <location>
        <position position="580"/>
    </location>
</feature>
<feature type="disulfide bond" evidence="4">
    <location>
        <begin position="21"/>
        <end position="32"/>
    </location>
</feature>
<feature type="disulfide bond" evidence="4">
    <location>
        <begin position="22"/>
        <end position="145"/>
    </location>
</feature>
<feature type="disulfide bond" evidence="4">
    <location>
        <begin position="26"/>
        <end position="42"/>
    </location>
</feature>
<feature type="disulfide bond" evidence="4">
    <location>
        <begin position="44"/>
        <end position="54"/>
    </location>
</feature>
<feature type="disulfide bond" evidence="4">
    <location>
        <begin position="555"/>
        <end position="561"/>
    </location>
</feature>